<gene>
    <name type="primary">gly1</name>
    <name type="ORF">SPAC23H3.09c</name>
</gene>
<sequence length="376" mass="41318">MSGSVTSTTTETRLCPSNQGSAKKYRPWNDFRSDTLTVPTDEMRRIMYEASDGDCVYEEDEDTRKLEVYVAKLTGKEAALFVTSGTQGNQLCIRSHLHQPPHSIICDDRAHIYNWEAGAIGLFTQAIVRPISPKNNVYITAEEIENKLILGNDIHFSPTGLICLENTIKGAVVPLDEVARISGLAKAHKIPLHCDGARLWDAAVASNVSIKEYCSYFDSVSLCLSKGLAAPVGSIIVGPRDFIAKAKWFRKAYGGGLRQSGMLAAAGLYSIQHNFPLLKQVHKYAIEVAEYAESLGIELEVPTQSNMVTLANINVAILCDEAKKSGIILMGPRIVFHIQITPDAVEILKNVLRRTVERQAVETHIVAKPGEFCVGY</sequence>
<feature type="chain" id="PRO_0000121571" description="Probable low-specificity L-threonine aldolase">
    <location>
        <begin position="1"/>
        <end position="376"/>
    </location>
</feature>
<feature type="region of interest" description="Disordered" evidence="2">
    <location>
        <begin position="1"/>
        <end position="22"/>
    </location>
</feature>
<feature type="compositionally biased region" description="Polar residues" evidence="2">
    <location>
        <begin position="1"/>
        <end position="21"/>
    </location>
</feature>
<feature type="modified residue" description="N6-(pyridoxal phosphate)lysine" evidence="1">
    <location>
        <position position="226"/>
    </location>
</feature>
<keyword id="KW-0456">Lyase</keyword>
<keyword id="KW-0663">Pyridoxal phosphate</keyword>
<keyword id="KW-1185">Reference proteome</keyword>
<name>GLY1_SCHPO</name>
<comment type="catalytic activity">
    <reaction>
        <text>L-threonine = acetaldehyde + glycine</text>
        <dbReference type="Rhea" id="RHEA:19625"/>
        <dbReference type="ChEBI" id="CHEBI:15343"/>
        <dbReference type="ChEBI" id="CHEBI:57305"/>
        <dbReference type="ChEBI" id="CHEBI:57926"/>
        <dbReference type="EC" id="4.1.2.48"/>
    </reaction>
</comment>
<comment type="catalytic activity">
    <reaction>
        <text>L-allo-threonine = acetaldehyde + glycine</text>
        <dbReference type="Rhea" id="RHEA:26209"/>
        <dbReference type="ChEBI" id="CHEBI:15343"/>
        <dbReference type="ChEBI" id="CHEBI:57305"/>
        <dbReference type="ChEBI" id="CHEBI:58585"/>
        <dbReference type="EC" id="4.1.2.48"/>
    </reaction>
</comment>
<comment type="cofactor">
    <cofactor>
        <name>pyridoxal 5'-phosphate</name>
        <dbReference type="ChEBI" id="CHEBI:597326"/>
    </cofactor>
</comment>
<comment type="pathway">
    <text>Amino-acid degradation; L-threonine degradation via aldolase pathway; acetaldehyde and glycine from L-threonine: step 1/1.</text>
</comment>
<comment type="subunit">
    <text evidence="1">Homotetramer.</text>
</comment>
<comment type="similarity">
    <text evidence="3">Belongs to the threonine aldolase family.</text>
</comment>
<organism>
    <name type="scientific">Schizosaccharomyces pombe (strain 972 / ATCC 24843)</name>
    <name type="common">Fission yeast</name>
    <dbReference type="NCBI Taxonomy" id="284812"/>
    <lineage>
        <taxon>Eukaryota</taxon>
        <taxon>Fungi</taxon>
        <taxon>Dikarya</taxon>
        <taxon>Ascomycota</taxon>
        <taxon>Taphrinomycotina</taxon>
        <taxon>Schizosaccharomycetes</taxon>
        <taxon>Schizosaccharomycetales</taxon>
        <taxon>Schizosaccharomycetaceae</taxon>
        <taxon>Schizosaccharomyces</taxon>
    </lineage>
</organism>
<dbReference type="EC" id="4.1.2.48"/>
<dbReference type="EMBL" id="CU329670">
    <property type="protein sequence ID" value="CAB16235.1"/>
    <property type="molecule type" value="Genomic_DNA"/>
</dbReference>
<dbReference type="PIR" id="T38302">
    <property type="entry name" value="T38302"/>
</dbReference>
<dbReference type="RefSeq" id="NP_593799.1">
    <property type="nucleotide sequence ID" value="NM_001019228.2"/>
</dbReference>
<dbReference type="SMR" id="O13940"/>
<dbReference type="BioGRID" id="278343">
    <property type="interactions" value="12"/>
</dbReference>
<dbReference type="FunCoup" id="O13940">
    <property type="interactions" value="462"/>
</dbReference>
<dbReference type="STRING" id="284812.O13940"/>
<dbReference type="iPTMnet" id="O13940"/>
<dbReference type="PaxDb" id="4896-SPAC23H3.09c.1"/>
<dbReference type="EnsemblFungi" id="SPAC23H3.09c.1">
    <property type="protein sequence ID" value="SPAC23H3.09c.1:pep"/>
    <property type="gene ID" value="SPAC23H3.09c"/>
</dbReference>
<dbReference type="GeneID" id="2541852"/>
<dbReference type="KEGG" id="spo:2541852"/>
<dbReference type="PomBase" id="SPAC23H3.09c">
    <property type="gene designation" value="gly1"/>
</dbReference>
<dbReference type="VEuPathDB" id="FungiDB:SPAC23H3.09c"/>
<dbReference type="eggNOG" id="KOG1368">
    <property type="taxonomic scope" value="Eukaryota"/>
</dbReference>
<dbReference type="HOGENOM" id="CLU_029381_1_1_1"/>
<dbReference type="InParanoid" id="O13940"/>
<dbReference type="OMA" id="LVRIKAW"/>
<dbReference type="PhylomeDB" id="O13940"/>
<dbReference type="UniPathway" id="UPA00044">
    <property type="reaction ID" value="UER00429"/>
</dbReference>
<dbReference type="PRO" id="PR:O13940"/>
<dbReference type="Proteomes" id="UP000002485">
    <property type="component" value="Chromosome I"/>
</dbReference>
<dbReference type="GO" id="GO:0005829">
    <property type="term" value="C:cytosol"/>
    <property type="evidence" value="ECO:0007005"/>
    <property type="project" value="PomBase"/>
</dbReference>
<dbReference type="GO" id="GO:0005634">
    <property type="term" value="C:nucleus"/>
    <property type="evidence" value="ECO:0007005"/>
    <property type="project" value="PomBase"/>
</dbReference>
<dbReference type="GO" id="GO:0008732">
    <property type="term" value="F:L-allo-threonine aldolase activity"/>
    <property type="evidence" value="ECO:0000318"/>
    <property type="project" value="GO_Central"/>
</dbReference>
<dbReference type="GO" id="GO:0006545">
    <property type="term" value="P:glycine biosynthetic process"/>
    <property type="evidence" value="ECO:0000318"/>
    <property type="project" value="GO_Central"/>
</dbReference>
<dbReference type="GO" id="GO:0006567">
    <property type="term" value="P:threonine catabolic process"/>
    <property type="evidence" value="ECO:0000318"/>
    <property type="project" value="GO_Central"/>
</dbReference>
<dbReference type="CDD" id="cd06502">
    <property type="entry name" value="TA_like"/>
    <property type="match status" value="1"/>
</dbReference>
<dbReference type="FunFam" id="3.40.640.10:FF:000030">
    <property type="entry name" value="Low-specificity L-threonine aldolase"/>
    <property type="match status" value="1"/>
</dbReference>
<dbReference type="Gene3D" id="3.40.640.10">
    <property type="entry name" value="Type I PLP-dependent aspartate aminotransferase-like (Major domain)"/>
    <property type="match status" value="1"/>
</dbReference>
<dbReference type="InterPro" id="IPR001597">
    <property type="entry name" value="ArAA_b-elim_lyase/Thr_aldolase"/>
</dbReference>
<dbReference type="InterPro" id="IPR023603">
    <property type="entry name" value="Low_specificity_L-TA-like"/>
</dbReference>
<dbReference type="InterPro" id="IPR015424">
    <property type="entry name" value="PyrdxlP-dep_Trfase"/>
</dbReference>
<dbReference type="InterPro" id="IPR015421">
    <property type="entry name" value="PyrdxlP-dep_Trfase_major"/>
</dbReference>
<dbReference type="NCBIfam" id="NF041359">
    <property type="entry name" value="GntG_guanitoxin"/>
    <property type="match status" value="1"/>
</dbReference>
<dbReference type="PANTHER" id="PTHR48097:SF9">
    <property type="entry name" value="L-THREONINE ALDOLASE"/>
    <property type="match status" value="1"/>
</dbReference>
<dbReference type="PANTHER" id="PTHR48097">
    <property type="entry name" value="L-THREONINE ALDOLASE-RELATED"/>
    <property type="match status" value="1"/>
</dbReference>
<dbReference type="Pfam" id="PF01212">
    <property type="entry name" value="Beta_elim_lyase"/>
    <property type="match status" value="1"/>
</dbReference>
<dbReference type="PIRSF" id="PIRSF017617">
    <property type="entry name" value="Thr_aldolase"/>
    <property type="match status" value="1"/>
</dbReference>
<dbReference type="SUPFAM" id="SSF53383">
    <property type="entry name" value="PLP-dependent transferases"/>
    <property type="match status" value="1"/>
</dbReference>
<accession>O13940</accession>
<proteinExistence type="inferred from homology"/>
<reference key="1">
    <citation type="journal article" date="2002" name="Nature">
        <title>The genome sequence of Schizosaccharomyces pombe.</title>
        <authorList>
            <person name="Wood V."/>
            <person name="Gwilliam R."/>
            <person name="Rajandream M.A."/>
            <person name="Lyne M.H."/>
            <person name="Lyne R."/>
            <person name="Stewart A."/>
            <person name="Sgouros J.G."/>
            <person name="Peat N."/>
            <person name="Hayles J."/>
            <person name="Baker S.G."/>
            <person name="Basham D."/>
            <person name="Bowman S."/>
            <person name="Brooks K."/>
            <person name="Brown D."/>
            <person name="Brown S."/>
            <person name="Chillingworth T."/>
            <person name="Churcher C.M."/>
            <person name="Collins M."/>
            <person name="Connor R."/>
            <person name="Cronin A."/>
            <person name="Davis P."/>
            <person name="Feltwell T."/>
            <person name="Fraser A."/>
            <person name="Gentles S."/>
            <person name="Goble A."/>
            <person name="Hamlin N."/>
            <person name="Harris D.E."/>
            <person name="Hidalgo J."/>
            <person name="Hodgson G."/>
            <person name="Holroyd S."/>
            <person name="Hornsby T."/>
            <person name="Howarth S."/>
            <person name="Huckle E.J."/>
            <person name="Hunt S."/>
            <person name="Jagels K."/>
            <person name="James K.D."/>
            <person name="Jones L."/>
            <person name="Jones M."/>
            <person name="Leather S."/>
            <person name="McDonald S."/>
            <person name="McLean J."/>
            <person name="Mooney P."/>
            <person name="Moule S."/>
            <person name="Mungall K.L."/>
            <person name="Murphy L.D."/>
            <person name="Niblett D."/>
            <person name="Odell C."/>
            <person name="Oliver K."/>
            <person name="O'Neil S."/>
            <person name="Pearson D."/>
            <person name="Quail M.A."/>
            <person name="Rabbinowitsch E."/>
            <person name="Rutherford K.M."/>
            <person name="Rutter S."/>
            <person name="Saunders D."/>
            <person name="Seeger K."/>
            <person name="Sharp S."/>
            <person name="Skelton J."/>
            <person name="Simmonds M.N."/>
            <person name="Squares R."/>
            <person name="Squares S."/>
            <person name="Stevens K."/>
            <person name="Taylor K."/>
            <person name="Taylor R.G."/>
            <person name="Tivey A."/>
            <person name="Walsh S.V."/>
            <person name="Warren T."/>
            <person name="Whitehead S."/>
            <person name="Woodward J.R."/>
            <person name="Volckaert G."/>
            <person name="Aert R."/>
            <person name="Robben J."/>
            <person name="Grymonprez B."/>
            <person name="Weltjens I."/>
            <person name="Vanstreels E."/>
            <person name="Rieger M."/>
            <person name="Schaefer M."/>
            <person name="Mueller-Auer S."/>
            <person name="Gabel C."/>
            <person name="Fuchs M."/>
            <person name="Duesterhoeft A."/>
            <person name="Fritzc C."/>
            <person name="Holzer E."/>
            <person name="Moestl D."/>
            <person name="Hilbert H."/>
            <person name="Borzym K."/>
            <person name="Langer I."/>
            <person name="Beck A."/>
            <person name="Lehrach H."/>
            <person name="Reinhardt R."/>
            <person name="Pohl T.M."/>
            <person name="Eger P."/>
            <person name="Zimmermann W."/>
            <person name="Wedler H."/>
            <person name="Wambutt R."/>
            <person name="Purnelle B."/>
            <person name="Goffeau A."/>
            <person name="Cadieu E."/>
            <person name="Dreano S."/>
            <person name="Gloux S."/>
            <person name="Lelaure V."/>
            <person name="Mottier S."/>
            <person name="Galibert F."/>
            <person name="Aves S.J."/>
            <person name="Xiang Z."/>
            <person name="Hunt C."/>
            <person name="Moore K."/>
            <person name="Hurst S.M."/>
            <person name="Lucas M."/>
            <person name="Rochet M."/>
            <person name="Gaillardin C."/>
            <person name="Tallada V.A."/>
            <person name="Garzon A."/>
            <person name="Thode G."/>
            <person name="Daga R.R."/>
            <person name="Cruzado L."/>
            <person name="Jimenez J."/>
            <person name="Sanchez M."/>
            <person name="del Rey F."/>
            <person name="Benito J."/>
            <person name="Dominguez A."/>
            <person name="Revuelta J.L."/>
            <person name="Moreno S."/>
            <person name="Armstrong J."/>
            <person name="Forsburg S.L."/>
            <person name="Cerutti L."/>
            <person name="Lowe T."/>
            <person name="McCombie W.R."/>
            <person name="Paulsen I."/>
            <person name="Potashkin J."/>
            <person name="Shpakovski G.V."/>
            <person name="Ussery D."/>
            <person name="Barrell B.G."/>
            <person name="Nurse P."/>
        </authorList>
    </citation>
    <scope>NUCLEOTIDE SEQUENCE [LARGE SCALE GENOMIC DNA]</scope>
    <source>
        <strain>972 / ATCC 24843</strain>
    </source>
</reference>
<protein>
    <recommendedName>
        <fullName>Probable low-specificity L-threonine aldolase</fullName>
        <ecNumber>4.1.2.48</ecNumber>
    </recommendedName>
</protein>
<evidence type="ECO:0000250" key="1"/>
<evidence type="ECO:0000256" key="2">
    <source>
        <dbReference type="SAM" id="MobiDB-lite"/>
    </source>
</evidence>
<evidence type="ECO:0000305" key="3"/>